<organism>
    <name type="scientific">Brucella abortus biovar 1 (strain 9-941)</name>
    <dbReference type="NCBI Taxonomy" id="262698"/>
    <lineage>
        <taxon>Bacteria</taxon>
        <taxon>Pseudomonadati</taxon>
        <taxon>Pseudomonadota</taxon>
        <taxon>Alphaproteobacteria</taxon>
        <taxon>Hyphomicrobiales</taxon>
        <taxon>Brucellaceae</taxon>
        <taxon>Brucella/Ochrobactrum group</taxon>
        <taxon>Brucella</taxon>
    </lineage>
</organism>
<feature type="chain" id="PRO_1000046829" description="Probable flagellum biosynthesis repressor protein FlbT">
    <location>
        <begin position="1"/>
        <end position="152"/>
    </location>
</feature>
<sequence length="152" mass="16829">MAANSKTAIRLSLRAGERIFINGAVLRADRKVSLELLNDATFLLENHVLQPEDTTTPLRQLYFAAQMMLIEPAMREQAGATFAQMLKGMFAMFKDAEILNALKLVDELVHNGRVFEALKTIRAQYPREAELMGAQPVVWPVTKSGKSAGANP</sequence>
<accession>Q576I9</accession>
<dbReference type="EMBL" id="AE017224">
    <property type="protein sequence ID" value="AAX76445.1"/>
    <property type="molecule type" value="Genomic_DNA"/>
</dbReference>
<dbReference type="RefSeq" id="WP_002966648.1">
    <property type="nucleotide sequence ID" value="NC_006933.1"/>
</dbReference>
<dbReference type="EnsemblBacteria" id="AAX76445">
    <property type="protein sequence ID" value="AAX76445"/>
    <property type="gene ID" value="BruAb2_1072"/>
</dbReference>
<dbReference type="GeneID" id="93016074"/>
<dbReference type="KEGG" id="bmb:BruAb2_1072"/>
<dbReference type="HOGENOM" id="CLU_130913_1_0_5"/>
<dbReference type="Proteomes" id="UP000000540">
    <property type="component" value="Chromosome II"/>
</dbReference>
<dbReference type="GO" id="GO:0048027">
    <property type="term" value="F:mRNA 5'-UTR binding"/>
    <property type="evidence" value="ECO:0007669"/>
    <property type="project" value="UniProtKB-UniRule"/>
</dbReference>
<dbReference type="GO" id="GO:0044781">
    <property type="term" value="P:bacterial-type flagellum organization"/>
    <property type="evidence" value="ECO:0007669"/>
    <property type="project" value="UniProtKB-KW"/>
</dbReference>
<dbReference type="GO" id="GO:0006402">
    <property type="term" value="P:mRNA catabolic process"/>
    <property type="evidence" value="ECO:0007669"/>
    <property type="project" value="InterPro"/>
</dbReference>
<dbReference type="GO" id="GO:1902209">
    <property type="term" value="P:negative regulation of bacterial-type flagellum assembly"/>
    <property type="evidence" value="ECO:0007669"/>
    <property type="project" value="UniProtKB-UniRule"/>
</dbReference>
<dbReference type="HAMAP" id="MF_00783">
    <property type="entry name" value="FlbT"/>
    <property type="match status" value="1"/>
</dbReference>
<dbReference type="InterPro" id="IPR009967">
    <property type="entry name" value="Flagellum_FlbT"/>
</dbReference>
<dbReference type="NCBIfam" id="NF001995">
    <property type="entry name" value="PRK00794.1-1"/>
    <property type="match status" value="1"/>
</dbReference>
<dbReference type="Pfam" id="PF07378">
    <property type="entry name" value="FlbT"/>
    <property type="match status" value="1"/>
</dbReference>
<dbReference type="PIRSF" id="PIRSF009533">
    <property type="entry name" value="FlbT"/>
    <property type="match status" value="1"/>
</dbReference>
<gene>
    <name evidence="1" type="primary">flbT</name>
    <name type="ordered locus">BruAb2_1072</name>
</gene>
<evidence type="ECO:0000255" key="1">
    <source>
        <dbReference type="HAMAP-Rule" id="MF_00783"/>
    </source>
</evidence>
<name>FLBT_BRUAB</name>
<reference key="1">
    <citation type="journal article" date="2005" name="J. Bacteriol.">
        <title>Completion of the genome sequence of Brucella abortus and comparison to the highly similar genomes of Brucella melitensis and Brucella suis.</title>
        <authorList>
            <person name="Halling S.M."/>
            <person name="Peterson-Burch B.D."/>
            <person name="Bricker B.J."/>
            <person name="Zuerner R.L."/>
            <person name="Qing Z."/>
            <person name="Li L.-L."/>
            <person name="Kapur V."/>
            <person name="Alt D.P."/>
            <person name="Olsen S.C."/>
        </authorList>
    </citation>
    <scope>NUCLEOTIDE SEQUENCE [LARGE SCALE GENOMIC DNA]</scope>
    <source>
        <strain>9-941</strain>
    </source>
</reference>
<comment type="function">
    <text evidence="1">Has a post-transcriptional repressor function in flagellum biogenesis. Associates with the 5'-UTR of fljK mRNA and promotes its degradation.</text>
</comment>
<comment type="similarity">
    <text evidence="1">Belongs to the FlbT family.</text>
</comment>
<keyword id="KW-1005">Bacterial flagellum biogenesis</keyword>
<keyword id="KW-0678">Repressor</keyword>
<keyword id="KW-0694">RNA-binding</keyword>
<protein>
    <recommendedName>
        <fullName evidence="1">Probable flagellum biosynthesis repressor protein FlbT</fullName>
    </recommendedName>
</protein>
<proteinExistence type="inferred from homology"/>